<dbReference type="EC" id="3.4.21.53" evidence="1"/>
<dbReference type="EMBL" id="CR382132">
    <property type="protein sequence ID" value="CAG78709.1"/>
    <property type="molecule type" value="Genomic_DNA"/>
</dbReference>
<dbReference type="RefSeq" id="XP_505897.1">
    <property type="nucleotide sequence ID" value="XM_505897.1"/>
</dbReference>
<dbReference type="SMR" id="Q6C0B5"/>
<dbReference type="FunCoup" id="Q6C0B5">
    <property type="interactions" value="1046"/>
</dbReference>
<dbReference type="STRING" id="284591.Q6C0B5"/>
<dbReference type="MEROPS" id="S16.010"/>
<dbReference type="EnsemblFungi" id="CAG78709">
    <property type="protein sequence ID" value="CAG78709"/>
    <property type="gene ID" value="YALI0_F26169g"/>
</dbReference>
<dbReference type="KEGG" id="yli:2908111"/>
<dbReference type="VEuPathDB" id="FungiDB:YALI0_F26169g"/>
<dbReference type="HOGENOM" id="CLU_004109_1_0_1"/>
<dbReference type="InParanoid" id="Q6C0B5"/>
<dbReference type="OMA" id="WLTNIPW"/>
<dbReference type="OrthoDB" id="110890at4891"/>
<dbReference type="Proteomes" id="UP000001300">
    <property type="component" value="Chromosome F"/>
</dbReference>
<dbReference type="GO" id="GO:0005759">
    <property type="term" value="C:mitochondrial matrix"/>
    <property type="evidence" value="ECO:0000318"/>
    <property type="project" value="GO_Central"/>
</dbReference>
<dbReference type="GO" id="GO:0005524">
    <property type="term" value="F:ATP binding"/>
    <property type="evidence" value="ECO:0007669"/>
    <property type="project" value="UniProtKB-UniRule"/>
</dbReference>
<dbReference type="GO" id="GO:0016887">
    <property type="term" value="F:ATP hydrolysis activity"/>
    <property type="evidence" value="ECO:0007669"/>
    <property type="project" value="UniProtKB-UniRule"/>
</dbReference>
<dbReference type="GO" id="GO:0004176">
    <property type="term" value="F:ATP-dependent peptidase activity"/>
    <property type="evidence" value="ECO:0000318"/>
    <property type="project" value="GO_Central"/>
</dbReference>
<dbReference type="GO" id="GO:0043565">
    <property type="term" value="F:sequence-specific DNA binding"/>
    <property type="evidence" value="ECO:0007669"/>
    <property type="project" value="UniProtKB-UniRule"/>
</dbReference>
<dbReference type="GO" id="GO:0004252">
    <property type="term" value="F:serine-type endopeptidase activity"/>
    <property type="evidence" value="ECO:0007669"/>
    <property type="project" value="UniProtKB-UniRule"/>
</dbReference>
<dbReference type="GO" id="GO:0003697">
    <property type="term" value="F:single-stranded DNA binding"/>
    <property type="evidence" value="ECO:0000318"/>
    <property type="project" value="GO_Central"/>
</dbReference>
<dbReference type="GO" id="GO:0034599">
    <property type="term" value="P:cellular response to oxidative stress"/>
    <property type="evidence" value="ECO:0007669"/>
    <property type="project" value="UniProtKB-UniRule"/>
</dbReference>
<dbReference type="GO" id="GO:0051131">
    <property type="term" value="P:chaperone-mediated protein complex assembly"/>
    <property type="evidence" value="ECO:0000318"/>
    <property type="project" value="GO_Central"/>
</dbReference>
<dbReference type="GO" id="GO:0007005">
    <property type="term" value="P:mitochondrion organization"/>
    <property type="evidence" value="ECO:0000318"/>
    <property type="project" value="GO_Central"/>
</dbReference>
<dbReference type="GO" id="GO:0070407">
    <property type="term" value="P:oxidation-dependent protein catabolic process"/>
    <property type="evidence" value="ECO:0007669"/>
    <property type="project" value="UniProtKB-UniRule"/>
</dbReference>
<dbReference type="GO" id="GO:0006515">
    <property type="term" value="P:protein quality control for misfolded or incompletely synthesized proteins"/>
    <property type="evidence" value="ECO:0000318"/>
    <property type="project" value="GO_Central"/>
</dbReference>
<dbReference type="CDD" id="cd19500">
    <property type="entry name" value="RecA-like_Lon"/>
    <property type="match status" value="1"/>
</dbReference>
<dbReference type="FunFam" id="3.40.50.300:FF:000021">
    <property type="entry name" value="Lon protease homolog"/>
    <property type="match status" value="1"/>
</dbReference>
<dbReference type="FunFam" id="1.20.5.5270:FF:000001">
    <property type="entry name" value="Lon protease homolog, mitochondrial"/>
    <property type="match status" value="1"/>
</dbReference>
<dbReference type="FunFam" id="3.30.230.10:FF:000015">
    <property type="entry name" value="Lon protease homolog, mitochondrial"/>
    <property type="match status" value="1"/>
</dbReference>
<dbReference type="Gene3D" id="1.10.8.60">
    <property type="match status" value="1"/>
</dbReference>
<dbReference type="Gene3D" id="1.20.5.5270">
    <property type="match status" value="1"/>
</dbReference>
<dbReference type="Gene3D" id="1.20.58.1480">
    <property type="match status" value="1"/>
</dbReference>
<dbReference type="Gene3D" id="3.30.230.10">
    <property type="match status" value="1"/>
</dbReference>
<dbReference type="Gene3D" id="2.30.130.40">
    <property type="entry name" value="LON domain-like"/>
    <property type="match status" value="1"/>
</dbReference>
<dbReference type="Gene3D" id="3.40.50.300">
    <property type="entry name" value="P-loop containing nucleotide triphosphate hydrolases"/>
    <property type="match status" value="1"/>
</dbReference>
<dbReference type="HAMAP" id="MF_03120">
    <property type="entry name" value="lonm_euk"/>
    <property type="match status" value="1"/>
</dbReference>
<dbReference type="InterPro" id="IPR003593">
    <property type="entry name" value="AAA+_ATPase"/>
</dbReference>
<dbReference type="InterPro" id="IPR003959">
    <property type="entry name" value="ATPase_AAA_core"/>
</dbReference>
<dbReference type="InterPro" id="IPR004815">
    <property type="entry name" value="Lon_bac/euk-typ"/>
</dbReference>
<dbReference type="InterPro" id="IPR054594">
    <property type="entry name" value="Lon_lid"/>
</dbReference>
<dbReference type="InterPro" id="IPR008269">
    <property type="entry name" value="Lon_proteolytic"/>
</dbReference>
<dbReference type="InterPro" id="IPR027065">
    <property type="entry name" value="Lon_Prtase"/>
</dbReference>
<dbReference type="InterPro" id="IPR003111">
    <property type="entry name" value="Lon_prtase_N"/>
</dbReference>
<dbReference type="InterPro" id="IPR046336">
    <property type="entry name" value="Lon_prtase_N_sf"/>
</dbReference>
<dbReference type="InterPro" id="IPR027503">
    <property type="entry name" value="Lonm_euk"/>
</dbReference>
<dbReference type="InterPro" id="IPR027417">
    <property type="entry name" value="P-loop_NTPase"/>
</dbReference>
<dbReference type="InterPro" id="IPR008268">
    <property type="entry name" value="Peptidase_S16_AS"/>
</dbReference>
<dbReference type="InterPro" id="IPR015947">
    <property type="entry name" value="PUA-like_sf"/>
</dbReference>
<dbReference type="InterPro" id="IPR020568">
    <property type="entry name" value="Ribosomal_Su5_D2-typ_SF"/>
</dbReference>
<dbReference type="InterPro" id="IPR014721">
    <property type="entry name" value="Ribsml_uS5_D2-typ_fold_subgr"/>
</dbReference>
<dbReference type="NCBIfam" id="TIGR00763">
    <property type="entry name" value="lon"/>
    <property type="match status" value="1"/>
</dbReference>
<dbReference type="PANTHER" id="PTHR43718">
    <property type="entry name" value="LON PROTEASE"/>
    <property type="match status" value="1"/>
</dbReference>
<dbReference type="PANTHER" id="PTHR43718:SF2">
    <property type="entry name" value="LON PROTEASE HOMOLOG, MITOCHONDRIAL"/>
    <property type="match status" value="1"/>
</dbReference>
<dbReference type="Pfam" id="PF00004">
    <property type="entry name" value="AAA"/>
    <property type="match status" value="1"/>
</dbReference>
<dbReference type="Pfam" id="PF05362">
    <property type="entry name" value="Lon_C"/>
    <property type="match status" value="1"/>
</dbReference>
<dbReference type="Pfam" id="PF22667">
    <property type="entry name" value="Lon_lid"/>
    <property type="match status" value="1"/>
</dbReference>
<dbReference type="Pfam" id="PF02190">
    <property type="entry name" value="LON_substr_bdg"/>
    <property type="match status" value="1"/>
</dbReference>
<dbReference type="PRINTS" id="PR00830">
    <property type="entry name" value="ENDOLAPTASE"/>
</dbReference>
<dbReference type="SMART" id="SM00382">
    <property type="entry name" value="AAA"/>
    <property type="match status" value="1"/>
</dbReference>
<dbReference type="SMART" id="SM00464">
    <property type="entry name" value="LON"/>
    <property type="match status" value="1"/>
</dbReference>
<dbReference type="SUPFAM" id="SSF52540">
    <property type="entry name" value="P-loop containing nucleoside triphosphate hydrolases"/>
    <property type="match status" value="1"/>
</dbReference>
<dbReference type="SUPFAM" id="SSF88697">
    <property type="entry name" value="PUA domain-like"/>
    <property type="match status" value="1"/>
</dbReference>
<dbReference type="SUPFAM" id="SSF54211">
    <property type="entry name" value="Ribosomal protein S5 domain 2-like"/>
    <property type="match status" value="1"/>
</dbReference>
<dbReference type="PROSITE" id="PS51787">
    <property type="entry name" value="LON_N"/>
    <property type="match status" value="1"/>
</dbReference>
<dbReference type="PROSITE" id="PS51786">
    <property type="entry name" value="LON_PROTEOLYTIC"/>
    <property type="match status" value="1"/>
</dbReference>
<dbReference type="PROSITE" id="PS01046">
    <property type="entry name" value="LON_SER"/>
    <property type="match status" value="1"/>
</dbReference>
<organism>
    <name type="scientific">Yarrowia lipolytica (strain CLIB 122 / E 150)</name>
    <name type="common">Yeast</name>
    <name type="synonym">Candida lipolytica</name>
    <dbReference type="NCBI Taxonomy" id="284591"/>
    <lineage>
        <taxon>Eukaryota</taxon>
        <taxon>Fungi</taxon>
        <taxon>Dikarya</taxon>
        <taxon>Ascomycota</taxon>
        <taxon>Saccharomycotina</taxon>
        <taxon>Dipodascomycetes</taxon>
        <taxon>Dipodascales</taxon>
        <taxon>Dipodascales incertae sedis</taxon>
        <taxon>Yarrowia</taxon>
    </lineage>
</organism>
<reference key="1">
    <citation type="journal article" date="2004" name="Nature">
        <title>Genome evolution in yeasts.</title>
        <authorList>
            <person name="Dujon B."/>
            <person name="Sherman D."/>
            <person name="Fischer G."/>
            <person name="Durrens P."/>
            <person name="Casaregola S."/>
            <person name="Lafontaine I."/>
            <person name="de Montigny J."/>
            <person name="Marck C."/>
            <person name="Neuveglise C."/>
            <person name="Talla E."/>
            <person name="Goffard N."/>
            <person name="Frangeul L."/>
            <person name="Aigle M."/>
            <person name="Anthouard V."/>
            <person name="Babour A."/>
            <person name="Barbe V."/>
            <person name="Barnay S."/>
            <person name="Blanchin S."/>
            <person name="Beckerich J.-M."/>
            <person name="Beyne E."/>
            <person name="Bleykasten C."/>
            <person name="Boisrame A."/>
            <person name="Boyer J."/>
            <person name="Cattolico L."/>
            <person name="Confanioleri F."/>
            <person name="de Daruvar A."/>
            <person name="Despons L."/>
            <person name="Fabre E."/>
            <person name="Fairhead C."/>
            <person name="Ferry-Dumazet H."/>
            <person name="Groppi A."/>
            <person name="Hantraye F."/>
            <person name="Hennequin C."/>
            <person name="Jauniaux N."/>
            <person name="Joyet P."/>
            <person name="Kachouri R."/>
            <person name="Kerrest A."/>
            <person name="Koszul R."/>
            <person name="Lemaire M."/>
            <person name="Lesur I."/>
            <person name="Ma L."/>
            <person name="Muller H."/>
            <person name="Nicaud J.-M."/>
            <person name="Nikolski M."/>
            <person name="Oztas S."/>
            <person name="Ozier-Kalogeropoulos O."/>
            <person name="Pellenz S."/>
            <person name="Potier S."/>
            <person name="Richard G.-F."/>
            <person name="Straub M.-L."/>
            <person name="Suleau A."/>
            <person name="Swennen D."/>
            <person name="Tekaia F."/>
            <person name="Wesolowski-Louvel M."/>
            <person name="Westhof E."/>
            <person name="Wirth B."/>
            <person name="Zeniou-Meyer M."/>
            <person name="Zivanovic Y."/>
            <person name="Bolotin-Fukuhara M."/>
            <person name="Thierry A."/>
            <person name="Bouchier C."/>
            <person name="Caudron B."/>
            <person name="Scarpelli C."/>
            <person name="Gaillardin C."/>
            <person name="Weissenbach J."/>
            <person name="Wincker P."/>
            <person name="Souciet J.-L."/>
        </authorList>
    </citation>
    <scope>NUCLEOTIDE SEQUENCE [LARGE SCALE GENOMIC DNA]</scope>
    <source>
        <strain>CLIB 122 / E 150</strain>
    </source>
</reference>
<protein>
    <recommendedName>
        <fullName evidence="1">Lon protease homolog, mitochondrial</fullName>
        <ecNumber evidence="1">3.4.21.53</ecNumber>
    </recommendedName>
</protein>
<proteinExistence type="inferred from homology"/>
<name>LONM_YARLI</name>
<gene>
    <name evidence="1" type="primary">PIM1</name>
    <name type="ordered locus">YALI0F26169g</name>
</gene>
<accession>Q6C0B5</accession>
<sequence>MIDNKVSVCSVGKVVITEVATFASHPLYIDRKTALTMIRSTRAASRLRLGARYYASHAPYGVLSEHLKRTPRTNSQHYYPPPQGAHDLPKVSSMGDSIASIVRGRELWVQEKDKSDKPEKSDKPDKTDKTDKDKPEKQDKDKTDKPEKTKVSHTPSSTASTGAGEAAAPPSAPPSGSGSSSSSGGGSPPAKKKKSPAQTYPEILAVPISDRPLLPGFHRALVIRDPNVMKAIDEMITRGEPYLACFFLKEFSNADVIQDASEVHDIGVIAEIQIQSQDHKRSTVDASNEPVYVLILYPHKRVRLNSLKNPPSSGGAVSYASVSEDVAEDGELLLTSKDLEGYSEEFLEAREEAKKAKSGKTEDSKHDSKVTSKDGKETTEKYDSSTLQESPYSFLSTYDVSTAAISLIEDKPHDKNNRVITTLTNEILNVFKMLRAEDATLREQLSSVVGDILRTEPAVLQEPGRLADFAAALCAGEGKEIQAVLTALDLETRLNRALILLKREHTNAKLQQKIARDVENKLNSKHKKFLLTEQMKAIKKELGVDDGKEKLVEKFNERAEKLDMPENIQKVFEEEMTRLQSMEPSSSEYSVTRNYLDWITQIPWNKTTEDRFNLPQAKDVLDSEHYGMKEVKDRILEFIAVSRMKGGLTGKILLLQGPPGVGKTSIGKSIAKALNRQFYRFSVGGTNDASEVKGHRRTYVGAIPGRLVQALKQTQTENPLILIDEIDKLSSSRTQGDPGAALLEALDPEQNNAFLDHYLDVPIDLSKVLFVCTSNDLSTIPWPLLDRMEVIEMSGYVPDEKLNIANQYLVPQSKKETGLENVNVQVTDDAINALNRQYCRESGVRNLKKHIEKIFRKVVVKIVGEYGQDEVAAEKIIDVEPVEKDKESAEKKTTKSKSKEVNEEPAAKEEKDKATESAESSETKVGTKAPPVTVPEDYSLTIDEKDLYDYVNSPPYSSDRMFEDPPPGVVMGLAYSPLGGSALYIECILDGGLSADSSARLSSTGNLGNVMKESTNIAYSFAKSFMIRNFPANRFFERAGIHLHCPAGAISKDGPSAGCAVVTGLLSLALNHPIDSSISMTGEISLTGKVMKIGGLREKAVGAHSAGAKTIIIPKDNSGDWDELPDTVKEGLTPVFAGTYQDVYDVVFQGLDTKVAAEVWKKQFDLIDRKLDKRGSK</sequence>
<comment type="function">
    <text evidence="1">ATP-dependent serine protease that mediates the selective degradation of misfolded, unassembled or oxidatively damaged polypeptides as well as certain short-lived regulatory proteins in the mitochondrial matrix. May also have a chaperone function in the assembly of inner membrane protein complexes. Participates in the regulation of mitochondrial gene expression and in the maintenance of the integrity of the mitochondrial genome. Binds to mitochondrial DNA in a site-specific manner.</text>
</comment>
<comment type="catalytic activity">
    <reaction evidence="1">
        <text>Hydrolysis of proteins in presence of ATP.</text>
        <dbReference type="EC" id="3.4.21.53"/>
    </reaction>
</comment>
<comment type="subunit">
    <text evidence="1">Homohexamer or homoheptamer. Organized in a ring with a central cavity.</text>
</comment>
<comment type="subcellular location">
    <subcellularLocation>
        <location evidence="1">Mitochondrion matrix</location>
    </subcellularLocation>
</comment>
<comment type="miscellaneous">
    <text evidence="1">This protein may be expected to contain an N-terminal transit peptide but none has been predicted.</text>
</comment>
<comment type="similarity">
    <text evidence="1">Belongs to the peptidase S16 family.</text>
</comment>
<evidence type="ECO:0000255" key="1">
    <source>
        <dbReference type="HAMAP-Rule" id="MF_03120"/>
    </source>
</evidence>
<evidence type="ECO:0000255" key="2">
    <source>
        <dbReference type="PROSITE-ProRule" id="PRU01122"/>
    </source>
</evidence>
<evidence type="ECO:0000255" key="3">
    <source>
        <dbReference type="PROSITE-ProRule" id="PRU01123"/>
    </source>
</evidence>
<evidence type="ECO:0000256" key="4">
    <source>
        <dbReference type="SAM" id="MobiDB-lite"/>
    </source>
</evidence>
<keyword id="KW-0067">ATP-binding</keyword>
<keyword id="KW-0238">DNA-binding</keyword>
<keyword id="KW-0378">Hydrolase</keyword>
<keyword id="KW-0496">Mitochondrion</keyword>
<keyword id="KW-0547">Nucleotide-binding</keyword>
<keyword id="KW-0645">Protease</keyword>
<keyword id="KW-1185">Reference proteome</keyword>
<keyword id="KW-0720">Serine protease</keyword>
<feature type="chain" id="PRO_0000395783" description="Lon protease homolog, mitochondrial">
    <location>
        <begin position="1"/>
        <end position="1177"/>
    </location>
</feature>
<feature type="domain" description="Lon N-terminal" evidence="3">
    <location>
        <begin position="203"/>
        <end position="505"/>
    </location>
</feature>
<feature type="domain" description="Lon proteolytic" evidence="2">
    <location>
        <begin position="964"/>
        <end position="1150"/>
    </location>
</feature>
<feature type="region of interest" description="Disordered" evidence="4">
    <location>
        <begin position="72"/>
        <end position="197"/>
    </location>
</feature>
<feature type="region of interest" description="Disordered" evidence="4">
    <location>
        <begin position="353"/>
        <end position="386"/>
    </location>
</feature>
<feature type="region of interest" description="Disordered" evidence="4">
    <location>
        <begin position="883"/>
        <end position="932"/>
    </location>
</feature>
<feature type="compositionally biased region" description="Basic and acidic residues" evidence="4">
    <location>
        <begin position="103"/>
        <end position="150"/>
    </location>
</feature>
<feature type="compositionally biased region" description="Low complexity" evidence="4">
    <location>
        <begin position="154"/>
        <end position="182"/>
    </location>
</feature>
<feature type="compositionally biased region" description="Basic and acidic residues" evidence="4">
    <location>
        <begin position="353"/>
        <end position="383"/>
    </location>
</feature>
<feature type="compositionally biased region" description="Basic and acidic residues" evidence="4">
    <location>
        <begin position="883"/>
        <end position="916"/>
    </location>
</feature>
<feature type="active site" evidence="1">
    <location>
        <position position="1056"/>
    </location>
</feature>
<feature type="active site" evidence="1">
    <location>
        <position position="1099"/>
    </location>
</feature>
<feature type="binding site" evidence="1">
    <location>
        <begin position="657"/>
        <end position="664"/>
    </location>
    <ligand>
        <name>ATP</name>
        <dbReference type="ChEBI" id="CHEBI:30616"/>
    </ligand>
</feature>